<evidence type="ECO:0000250" key="1"/>
<evidence type="ECO:0000255" key="2"/>
<evidence type="ECO:0000255" key="3">
    <source>
        <dbReference type="PROSITE-ProRule" id="PRU01262"/>
    </source>
</evidence>
<evidence type="ECO:0000305" key="4"/>
<name>ATG27_PICST</name>
<dbReference type="EMBL" id="CP000499">
    <property type="protein sequence ID" value="ABN67240.2"/>
    <property type="molecule type" value="Genomic_DNA"/>
</dbReference>
<dbReference type="RefSeq" id="XP_001385269.2">
    <property type="nucleotide sequence ID" value="XM_001385232.1"/>
</dbReference>
<dbReference type="FunCoup" id="A3LW83">
    <property type="interactions" value="88"/>
</dbReference>
<dbReference type="STRING" id="322104.A3LW83"/>
<dbReference type="GeneID" id="4839593"/>
<dbReference type="KEGG" id="pic:PICST_46861"/>
<dbReference type="eggNOG" id="ENOG502QVJJ">
    <property type="taxonomic scope" value="Eukaryota"/>
</dbReference>
<dbReference type="HOGENOM" id="CLU_089705_0_0_1"/>
<dbReference type="InParanoid" id="A3LW83"/>
<dbReference type="OMA" id="NKGNAID"/>
<dbReference type="OrthoDB" id="29460at2759"/>
<dbReference type="Proteomes" id="UP000002258">
    <property type="component" value="Chromosome 5"/>
</dbReference>
<dbReference type="GO" id="GO:0030659">
    <property type="term" value="C:cytoplasmic vesicle membrane"/>
    <property type="evidence" value="ECO:0007669"/>
    <property type="project" value="UniProtKB-SubCell"/>
</dbReference>
<dbReference type="GO" id="GO:0000139">
    <property type="term" value="C:Golgi membrane"/>
    <property type="evidence" value="ECO:0007669"/>
    <property type="project" value="UniProtKB-SubCell"/>
</dbReference>
<dbReference type="GO" id="GO:0031966">
    <property type="term" value="C:mitochondrial membrane"/>
    <property type="evidence" value="ECO:0007669"/>
    <property type="project" value="UniProtKB-SubCell"/>
</dbReference>
<dbReference type="GO" id="GO:0034045">
    <property type="term" value="C:phagophore assembly site membrane"/>
    <property type="evidence" value="ECO:0007669"/>
    <property type="project" value="UniProtKB-SubCell"/>
</dbReference>
<dbReference type="GO" id="GO:0006914">
    <property type="term" value="P:autophagy"/>
    <property type="evidence" value="ECO:0007669"/>
    <property type="project" value="UniProtKB-KW"/>
</dbReference>
<dbReference type="GO" id="GO:0015031">
    <property type="term" value="P:protein transport"/>
    <property type="evidence" value="ECO:0007669"/>
    <property type="project" value="UniProtKB-KW"/>
</dbReference>
<dbReference type="Gene3D" id="2.70.130.10">
    <property type="entry name" value="Mannose-6-phosphate receptor binding domain"/>
    <property type="match status" value="1"/>
</dbReference>
<dbReference type="InterPro" id="IPR018939">
    <property type="entry name" value="Autophagy-rel_prot_27"/>
</dbReference>
<dbReference type="InterPro" id="IPR009011">
    <property type="entry name" value="Man6P_isomerase_rcpt-bd_dom_sf"/>
</dbReference>
<dbReference type="InterPro" id="IPR044865">
    <property type="entry name" value="MRH_dom"/>
</dbReference>
<dbReference type="PANTHER" id="PTHR15071:SF13">
    <property type="entry name" value="AUTOPHAGY-RELATED PROTEIN 27"/>
    <property type="match status" value="1"/>
</dbReference>
<dbReference type="PANTHER" id="PTHR15071">
    <property type="entry name" value="MANNOSE-6-PHOSPHATE RECEPTOR FAMILY MEMBER"/>
    <property type="match status" value="1"/>
</dbReference>
<dbReference type="Pfam" id="PF09451">
    <property type="entry name" value="ATG27"/>
    <property type="match status" value="1"/>
</dbReference>
<dbReference type="SUPFAM" id="SSF50911">
    <property type="entry name" value="Mannose 6-phosphate receptor domain"/>
    <property type="match status" value="1"/>
</dbReference>
<dbReference type="PROSITE" id="PS51914">
    <property type="entry name" value="MRH"/>
    <property type="match status" value="1"/>
</dbReference>
<gene>
    <name type="primary">ATG27</name>
    <name type="ORF">PICST_46861</name>
</gene>
<accession>A3LW83</accession>
<protein>
    <recommendedName>
        <fullName>Autophagy-related protein 27</fullName>
    </recommendedName>
</protein>
<proteinExistence type="inferred from homology"/>
<comment type="function">
    <text evidence="1">Effector of VPS34 phosphatidylinositol 3-phosphate kinase signaling. Regulates the cytoplasm to vacuole transport (Cvt) vesicle formation. Plays a role in ATG protein retrieval from the pre-autophagosomal structure (PAS) and is especially required for autophagy-dependent cycling of ATG9 (By similarity).</text>
</comment>
<comment type="subcellular location">
    <subcellularLocation>
        <location evidence="1">Cytoplasmic vesicle membrane</location>
        <topology evidence="1">Single-pass type I membrane protein</topology>
    </subcellularLocation>
    <subcellularLocation>
        <location evidence="1">Golgi apparatus membrane</location>
        <topology evidence="1">Single-pass type I membrane protein</topology>
    </subcellularLocation>
    <subcellularLocation>
        <location evidence="1">Mitochondrion membrane</location>
        <topology evidence="1">Single-pass membrane protein</topology>
    </subcellularLocation>
    <subcellularLocation>
        <location evidence="1">Preautophagosomal structure membrane</location>
        <topology evidence="1">Single-pass type I membrane protein</topology>
    </subcellularLocation>
    <text evidence="1">Cycles among the pre-autophagosomal structure (PAS), mitochondria and Golgi.</text>
</comment>
<comment type="similarity">
    <text evidence="4">Belongs to the ATG27 family.</text>
</comment>
<organism>
    <name type="scientific">Scheffersomyces stipitis (strain ATCC 58785 / CBS 6054 / NBRC 10063 / NRRL Y-11545)</name>
    <name type="common">Yeast</name>
    <name type="synonym">Pichia stipitis</name>
    <dbReference type="NCBI Taxonomy" id="322104"/>
    <lineage>
        <taxon>Eukaryota</taxon>
        <taxon>Fungi</taxon>
        <taxon>Dikarya</taxon>
        <taxon>Ascomycota</taxon>
        <taxon>Saccharomycotina</taxon>
        <taxon>Pichiomycetes</taxon>
        <taxon>Debaryomycetaceae</taxon>
        <taxon>Scheffersomyces</taxon>
    </lineage>
</organism>
<sequence>MWAIAGLISVLLAQAAAFDCSAKELEHYNFELLKGIHSVTSLKDTPPSQTNLTWYFGICEPIKEGLDACPQNSDVCGITSIILKGDSKNRVISEIVSFNTNLQKTYEPFSDSEIDSTGIAISYTGATWGDNSINAALRFVCPPKNNEHILDKFKLDSWDGKKLKASMYSKAACITSDKDKLKPPPKKPDNGESWGWFTWIFIFLVLFLSIYIVGGAWFQYNKGNAIDFSSALREVLDNFVELLKGIPAFSREIIEKFTSNSNRGEYSAV</sequence>
<reference key="1">
    <citation type="journal article" date="2007" name="Nat. Biotechnol.">
        <title>Genome sequence of the lignocellulose-bioconverting and xylose-fermenting yeast Pichia stipitis.</title>
        <authorList>
            <person name="Jeffries T.W."/>
            <person name="Grigoriev I.V."/>
            <person name="Grimwood J."/>
            <person name="Laplaza J.M."/>
            <person name="Aerts A."/>
            <person name="Salamov A."/>
            <person name="Schmutz J."/>
            <person name="Lindquist E."/>
            <person name="Dehal P."/>
            <person name="Shapiro H."/>
            <person name="Jin Y.-S."/>
            <person name="Passoth V."/>
            <person name="Richardson P.M."/>
        </authorList>
    </citation>
    <scope>NUCLEOTIDE SEQUENCE [LARGE SCALE GENOMIC DNA]</scope>
    <source>
        <strain>ATCC 58785 / CBS 6054 / NBRC 10063 / NRRL Y-11545</strain>
    </source>
</reference>
<keyword id="KW-0072">Autophagy</keyword>
<keyword id="KW-0968">Cytoplasmic vesicle</keyword>
<keyword id="KW-1015">Disulfide bond</keyword>
<keyword id="KW-0333">Golgi apparatus</keyword>
<keyword id="KW-0472">Membrane</keyword>
<keyword id="KW-0496">Mitochondrion</keyword>
<keyword id="KW-0653">Protein transport</keyword>
<keyword id="KW-1185">Reference proteome</keyword>
<keyword id="KW-0732">Signal</keyword>
<keyword id="KW-0812">Transmembrane</keyword>
<keyword id="KW-1133">Transmembrane helix</keyword>
<keyword id="KW-0813">Transport</keyword>
<feature type="signal peptide" evidence="2">
    <location>
        <begin position="1"/>
        <end position="17"/>
    </location>
</feature>
<feature type="chain" id="PRO_0000318054" description="Autophagy-related protein 27">
    <location>
        <begin position="18"/>
        <end position="269"/>
    </location>
</feature>
<feature type="topological domain" description="Lumenal" evidence="1">
    <location>
        <begin position="18"/>
        <end position="193"/>
    </location>
</feature>
<feature type="transmembrane region" description="Helical" evidence="2">
    <location>
        <begin position="194"/>
        <end position="214"/>
    </location>
</feature>
<feature type="topological domain" description="Cytoplasmic" evidence="1">
    <location>
        <begin position="215"/>
        <end position="269"/>
    </location>
</feature>
<feature type="domain" description="MRH" evidence="3">
    <location>
        <begin position="18"/>
        <end position="175"/>
    </location>
</feature>
<feature type="disulfide bond" evidence="3">
    <location>
        <begin position="20"/>
        <end position="59"/>
    </location>
</feature>
<feature type="disulfide bond" evidence="3">
    <location>
        <begin position="69"/>
        <end position="76"/>
    </location>
</feature>
<feature type="disulfide bond" evidence="3">
    <location>
        <begin position="141"/>
        <end position="173"/>
    </location>
</feature>